<organism>
    <name type="scientific">Escherichia coli (strain SE11)</name>
    <dbReference type="NCBI Taxonomy" id="409438"/>
    <lineage>
        <taxon>Bacteria</taxon>
        <taxon>Pseudomonadati</taxon>
        <taxon>Pseudomonadota</taxon>
        <taxon>Gammaproteobacteria</taxon>
        <taxon>Enterobacterales</taxon>
        <taxon>Enterobacteriaceae</taxon>
        <taxon>Escherichia</taxon>
    </lineage>
</organism>
<keyword id="KW-0687">Ribonucleoprotein</keyword>
<keyword id="KW-0689">Ribosomal protein</keyword>
<proteinExistence type="inferred from homology"/>
<sequence>MAENQYYGTGRRKSSAARVFIKPGNGKIVINQRSLEQYFGRETARMVVRQPLELVDMVEKLDLYITVKGGGISGQAGAIRHGITRALMEYDESLRSELRKAGFVTRDARQVERKKVGLRKARRRPQFSKR</sequence>
<name>RS9_ECOSE</name>
<accession>B6I1U8</accession>
<gene>
    <name evidence="1" type="primary">rpsI</name>
    <name type="ordered locus">ECSE_3509</name>
</gene>
<feature type="chain" id="PRO_1000128122" description="Small ribosomal subunit protein uS9">
    <location>
        <begin position="1"/>
        <end position="130"/>
    </location>
</feature>
<dbReference type="EMBL" id="AP009240">
    <property type="protein sequence ID" value="BAG79033.1"/>
    <property type="molecule type" value="Genomic_DNA"/>
</dbReference>
<dbReference type="RefSeq" id="WP_000829818.1">
    <property type="nucleotide sequence ID" value="NC_011415.1"/>
</dbReference>
<dbReference type="SMR" id="B6I1U8"/>
<dbReference type="GeneID" id="98390344"/>
<dbReference type="KEGG" id="ecy:ECSE_3509"/>
<dbReference type="HOGENOM" id="CLU_046483_2_1_6"/>
<dbReference type="Proteomes" id="UP000008199">
    <property type="component" value="Chromosome"/>
</dbReference>
<dbReference type="GO" id="GO:0022627">
    <property type="term" value="C:cytosolic small ribosomal subunit"/>
    <property type="evidence" value="ECO:0007669"/>
    <property type="project" value="TreeGrafter"/>
</dbReference>
<dbReference type="GO" id="GO:0003723">
    <property type="term" value="F:RNA binding"/>
    <property type="evidence" value="ECO:0007669"/>
    <property type="project" value="TreeGrafter"/>
</dbReference>
<dbReference type="GO" id="GO:0003735">
    <property type="term" value="F:structural constituent of ribosome"/>
    <property type="evidence" value="ECO:0007669"/>
    <property type="project" value="InterPro"/>
</dbReference>
<dbReference type="GO" id="GO:0006412">
    <property type="term" value="P:translation"/>
    <property type="evidence" value="ECO:0007669"/>
    <property type="project" value="UniProtKB-UniRule"/>
</dbReference>
<dbReference type="FunFam" id="3.30.230.10:FF:000001">
    <property type="entry name" value="30S ribosomal protein S9"/>
    <property type="match status" value="1"/>
</dbReference>
<dbReference type="Gene3D" id="3.30.230.10">
    <property type="match status" value="1"/>
</dbReference>
<dbReference type="HAMAP" id="MF_00532_B">
    <property type="entry name" value="Ribosomal_uS9_B"/>
    <property type="match status" value="1"/>
</dbReference>
<dbReference type="InterPro" id="IPR020568">
    <property type="entry name" value="Ribosomal_Su5_D2-typ_SF"/>
</dbReference>
<dbReference type="InterPro" id="IPR000754">
    <property type="entry name" value="Ribosomal_uS9"/>
</dbReference>
<dbReference type="InterPro" id="IPR023035">
    <property type="entry name" value="Ribosomal_uS9_bac/plastid"/>
</dbReference>
<dbReference type="InterPro" id="IPR020574">
    <property type="entry name" value="Ribosomal_uS9_CS"/>
</dbReference>
<dbReference type="InterPro" id="IPR014721">
    <property type="entry name" value="Ribsml_uS5_D2-typ_fold_subgr"/>
</dbReference>
<dbReference type="NCBIfam" id="NF001099">
    <property type="entry name" value="PRK00132.1"/>
    <property type="match status" value="1"/>
</dbReference>
<dbReference type="PANTHER" id="PTHR21569">
    <property type="entry name" value="RIBOSOMAL PROTEIN S9"/>
    <property type="match status" value="1"/>
</dbReference>
<dbReference type="PANTHER" id="PTHR21569:SF1">
    <property type="entry name" value="SMALL RIBOSOMAL SUBUNIT PROTEIN US9M"/>
    <property type="match status" value="1"/>
</dbReference>
<dbReference type="Pfam" id="PF00380">
    <property type="entry name" value="Ribosomal_S9"/>
    <property type="match status" value="1"/>
</dbReference>
<dbReference type="SUPFAM" id="SSF54211">
    <property type="entry name" value="Ribosomal protein S5 domain 2-like"/>
    <property type="match status" value="1"/>
</dbReference>
<dbReference type="PROSITE" id="PS00360">
    <property type="entry name" value="RIBOSOMAL_S9"/>
    <property type="match status" value="1"/>
</dbReference>
<reference key="1">
    <citation type="journal article" date="2008" name="DNA Res.">
        <title>Complete genome sequence and comparative analysis of the wild-type commensal Escherichia coli strain SE11 isolated from a healthy adult.</title>
        <authorList>
            <person name="Oshima K."/>
            <person name="Toh H."/>
            <person name="Ogura Y."/>
            <person name="Sasamoto H."/>
            <person name="Morita H."/>
            <person name="Park S.-H."/>
            <person name="Ooka T."/>
            <person name="Iyoda S."/>
            <person name="Taylor T.D."/>
            <person name="Hayashi T."/>
            <person name="Itoh K."/>
            <person name="Hattori M."/>
        </authorList>
    </citation>
    <scope>NUCLEOTIDE SEQUENCE [LARGE SCALE GENOMIC DNA]</scope>
    <source>
        <strain>SE11</strain>
    </source>
</reference>
<evidence type="ECO:0000255" key="1">
    <source>
        <dbReference type="HAMAP-Rule" id="MF_00532"/>
    </source>
</evidence>
<evidence type="ECO:0000305" key="2"/>
<protein>
    <recommendedName>
        <fullName evidence="1">Small ribosomal subunit protein uS9</fullName>
    </recommendedName>
    <alternativeName>
        <fullName evidence="2">30S ribosomal protein S9</fullName>
    </alternativeName>
</protein>
<comment type="similarity">
    <text evidence="1">Belongs to the universal ribosomal protein uS9 family.</text>
</comment>